<comment type="function">
    <text>Kappa-casein stabilizes micelle formation, preventing casein precipitation in milk.</text>
</comment>
<comment type="subcellular location">
    <subcellularLocation>
        <location>Secreted</location>
    </subcellularLocation>
</comment>
<comment type="tissue specificity">
    <text>Mammary gland specific. Secreted in milk.</text>
</comment>
<comment type="similarity">
    <text evidence="3">Belongs to the kappa-casein family.</text>
</comment>
<accession>P33618</accession>
<accession>Q9TV51</accession>
<name>CASK_RABIT</name>
<proteinExistence type="evidence at transcript level"/>
<keyword id="KW-0325">Glycoprotein</keyword>
<keyword id="KW-0494">Milk protein</keyword>
<keyword id="KW-0597">Phosphoprotein</keyword>
<keyword id="KW-1185">Reference proteome</keyword>
<keyword id="KW-0964">Secreted</keyword>
<keyword id="KW-0732">Signal</keyword>
<organism>
    <name type="scientific">Oryctolagus cuniculus</name>
    <name type="common">Rabbit</name>
    <dbReference type="NCBI Taxonomy" id="9986"/>
    <lineage>
        <taxon>Eukaryota</taxon>
        <taxon>Metazoa</taxon>
        <taxon>Chordata</taxon>
        <taxon>Craniata</taxon>
        <taxon>Vertebrata</taxon>
        <taxon>Euteleostomi</taxon>
        <taxon>Mammalia</taxon>
        <taxon>Eutheria</taxon>
        <taxon>Euarchontoglires</taxon>
        <taxon>Glires</taxon>
        <taxon>Lagomorpha</taxon>
        <taxon>Leporidae</taxon>
        <taxon>Oryctolagus</taxon>
    </lineage>
</organism>
<reference key="1">
    <citation type="journal article" date="1993" name="J. Mol. Endocrinol.">
        <title>Characterization of rabbit kappa-casein cDNA: control of kappa-casein gene expression in vivo and in vitro.</title>
        <authorList>
            <person name="Bosze Z."/>
            <person name="Devinoy E."/>
            <person name="Puissant C."/>
            <person name="Fontaine M.L."/>
            <person name="Houdebine L.M."/>
        </authorList>
    </citation>
    <scope>NUCLEOTIDE SEQUENCE [MRNA]</scope>
    <source>
        <strain>New Zealand white</strain>
        <tissue>Mammary gland</tissue>
    </source>
</reference>
<reference key="2">
    <citation type="journal article" date="1996" name="Gene">
        <title>Structure of the rabbit kappa-casein encoding gene: expression of the cloned gene in the mammary gland of transgenic mice.</title>
        <authorList>
            <person name="Baranyi M."/>
            <person name="Aszodi A."/>
            <person name="Devinoy E."/>
            <person name="Fontaine M.L."/>
            <person name="Houdebine L.M."/>
            <person name="Bosze Z."/>
        </authorList>
    </citation>
    <scope>NUCLEOTIDE SEQUENCE [GENOMIC DNA]</scope>
    <source>
        <strain>New Zealand white</strain>
    </source>
</reference>
<reference key="3">
    <citation type="submission" date="1997-11" db="EMBL/GenBank/DDBJ databases">
        <title>Polymorphism of the rabbit kappa-casein gene. Presence or absence of both 1800 nt and 100 nt in two intronic regions containing microsatellites and similar to LINE.</title>
        <authorList>
            <person name="Hiripi L."/>
            <person name="Devinoy E."/>
            <person name="Rat P."/>
            <person name="Baranyi M."/>
            <person name="Fonatine M.L."/>
            <person name="Bosze Z."/>
        </authorList>
    </citation>
    <scope>NUCLEOTIDE SEQUENCE [GENOMIC DNA] OF 31-180</scope>
    <source>
        <strain>New Zealand white</strain>
    </source>
</reference>
<reference key="4">
    <citation type="thesis" date="1993" institute="Nottingham University" country="United Kingdom">
        <authorList>
            <person name="Dawson S.P."/>
        </authorList>
    </citation>
    <scope>NUCLEOTIDE SEQUENCE [MRNA] OF 55-167</scope>
    <source>
        <strain>New Zealand white</strain>
        <tissue>Mammary gland</tissue>
    </source>
</reference>
<feature type="signal peptide" evidence="1">
    <location>
        <begin position="1"/>
        <end position="21"/>
    </location>
</feature>
<feature type="chain" id="PRO_0000004503" description="Kappa-casein">
    <location>
        <begin position="22"/>
        <end position="180"/>
    </location>
</feature>
<feature type="site" description="Cleavage; by chymosin/rennin" evidence="1">
    <location>
        <begin position="116"/>
        <end position="117"/>
    </location>
</feature>
<feature type="modified residue" description="Phosphoserine; alternate" evidence="2">
    <location>
        <position position="160"/>
    </location>
</feature>
<feature type="glycosylation site" description="O-linked (GalNAc...) threonine" evidence="2">
    <location>
        <position position="132"/>
    </location>
</feature>
<feature type="glycosylation site" description="O-linked (GalNAc...) threonine" evidence="2">
    <location>
        <position position="142"/>
    </location>
</feature>
<feature type="glycosylation site" description="O-linked (GalNAc...) threonine" evidence="2">
    <location>
        <position position="147"/>
    </location>
</feature>
<feature type="glycosylation site" description="O-linked (GalNAc...) threonine" evidence="2">
    <location>
        <position position="153"/>
    </location>
</feature>
<feature type="glycosylation site" description="O-linked (GalNAc...) serine; alternate" evidence="2">
    <location>
        <position position="160"/>
    </location>
</feature>
<feature type="sequence conflict" description="In Ref. 4; CAA54232." evidence="3" ref="4">
    <original>YP</original>
    <variation>HT</variation>
    <location>
        <begin position="56"/>
        <end position="57"/>
    </location>
</feature>
<feature type="sequence conflict" description="In Ref. 4; CAA54232." evidence="3" ref="4">
    <original>S</original>
    <variation>R</variation>
    <location>
        <position position="166"/>
    </location>
</feature>
<evidence type="ECO:0000250" key="1"/>
<evidence type="ECO:0000250" key="2">
    <source>
        <dbReference type="UniProtKB" id="P02668"/>
    </source>
</evidence>
<evidence type="ECO:0000305" key="3"/>
<gene>
    <name type="primary">CSN3</name>
    <name type="synonym">CSN10</name>
    <name type="synonym">CSNK</name>
</gene>
<sequence>MMKHFLLVVNILAVTLPFLAADIQNQEQTTCRENEERLFHQVTAPYIPVHYVMNRYPQYEPSYYLRRQAVPTLNPFMLNPYYVKPIVFKPNVQVPHWQILPNIHQPKVGRHSHPFFMAILPNKMQDKAVTPTTNTIAAVEPTPIPTTEPVVSTEVIAEASPELIISPETTTEATAASAAA</sequence>
<dbReference type="EMBL" id="Z18243">
    <property type="protein sequence ID" value="CAA79145.1"/>
    <property type="molecule type" value="mRNA"/>
</dbReference>
<dbReference type="EMBL" id="U44057">
    <property type="protein sequence ID" value="AAC48796.1"/>
    <property type="molecule type" value="Genomic_DNA"/>
</dbReference>
<dbReference type="EMBL" id="U44055">
    <property type="protein sequence ID" value="AAC48796.1"/>
    <property type="status" value="JOINED"/>
    <property type="molecule type" value="Genomic_DNA"/>
</dbReference>
<dbReference type="EMBL" id="U44056">
    <property type="protein sequence ID" value="AAC48796.1"/>
    <property type="status" value="JOINED"/>
    <property type="molecule type" value="Genomic_DNA"/>
</dbReference>
<dbReference type="EMBL" id="AF033505">
    <property type="protein sequence ID" value="AAD48079.1"/>
    <property type="molecule type" value="Genomic_DNA"/>
</dbReference>
<dbReference type="EMBL" id="X76910">
    <property type="protein sequence ID" value="CAA54232.1"/>
    <property type="molecule type" value="mRNA"/>
</dbReference>
<dbReference type="PIR" id="JC4955">
    <property type="entry name" value="JC4955"/>
</dbReference>
<dbReference type="RefSeq" id="NP_001076094.1">
    <property type="nucleotide sequence ID" value="NM_001082625.3"/>
</dbReference>
<dbReference type="FunCoup" id="P33618">
    <property type="interactions" value="105"/>
</dbReference>
<dbReference type="STRING" id="9986.ENSOCUP00000036667"/>
<dbReference type="Allergome" id="2149">
    <property type="allergen name" value="Ory c 8"/>
</dbReference>
<dbReference type="GlyCosmos" id="P33618">
    <property type="glycosylation" value="5 sites, No reported glycans"/>
</dbReference>
<dbReference type="PaxDb" id="9986-ENSOCUP00000013028"/>
<dbReference type="Ensembl" id="ENSOCUT00000015158.4">
    <property type="protein sequence ID" value="ENSOCUP00000013028.2"/>
    <property type="gene ID" value="ENSOCUG00000015167.4"/>
</dbReference>
<dbReference type="GeneID" id="100009311"/>
<dbReference type="KEGG" id="ocu:100009311"/>
<dbReference type="CTD" id="1448"/>
<dbReference type="eggNOG" id="ENOG502TM2T">
    <property type="taxonomic scope" value="Eukaryota"/>
</dbReference>
<dbReference type="GeneTree" id="ENSGT00390000009184"/>
<dbReference type="HOGENOM" id="CLU_103388_0_0_1"/>
<dbReference type="InParanoid" id="P33618"/>
<dbReference type="OMA" id="YYVPNSY"/>
<dbReference type="OrthoDB" id="9836334at2759"/>
<dbReference type="TreeFam" id="TF338369"/>
<dbReference type="Proteomes" id="UP000001811">
    <property type="component" value="Chromosome 15"/>
</dbReference>
<dbReference type="Bgee" id="ENSOCUG00000015167">
    <property type="expression patterns" value="Expressed in lung"/>
</dbReference>
<dbReference type="GO" id="GO:0005615">
    <property type="term" value="C:extracellular space"/>
    <property type="evidence" value="ECO:0007669"/>
    <property type="project" value="TreeGrafter"/>
</dbReference>
<dbReference type="GO" id="GO:0007595">
    <property type="term" value="P:lactation"/>
    <property type="evidence" value="ECO:0007669"/>
    <property type="project" value="TreeGrafter"/>
</dbReference>
<dbReference type="GO" id="GO:0050821">
    <property type="term" value="P:protein stabilization"/>
    <property type="evidence" value="ECO:0007669"/>
    <property type="project" value="TreeGrafter"/>
</dbReference>
<dbReference type="InterPro" id="IPR000117">
    <property type="entry name" value="Casein_kappa"/>
</dbReference>
<dbReference type="PANTHER" id="PTHR11470">
    <property type="entry name" value="KAPPA CASEIN"/>
    <property type="match status" value="1"/>
</dbReference>
<dbReference type="PANTHER" id="PTHR11470:SF2">
    <property type="entry name" value="KAPPA-CASEIN"/>
    <property type="match status" value="1"/>
</dbReference>
<dbReference type="Pfam" id="PF00997">
    <property type="entry name" value="Casein_kappa"/>
    <property type="match status" value="1"/>
</dbReference>
<dbReference type="PIRSF" id="PIRSF002374">
    <property type="entry name" value="Casein_kappa"/>
    <property type="match status" value="1"/>
</dbReference>
<protein>
    <recommendedName>
        <fullName>Kappa-casein</fullName>
    </recommendedName>
</protein>